<evidence type="ECO:0000255" key="1">
    <source>
        <dbReference type="HAMAP-Rule" id="MF_00214"/>
    </source>
</evidence>
<gene>
    <name evidence="1" type="primary">aroD</name>
    <name type="ordered locus">NGO_0740</name>
</gene>
<sequence>MHTSLTVKNTVIGSGRTKIAVPLVARDAADLSSVLSQIKNLPFDIVEFRADFLECAGSIGEVLRHTQAVRDALPDKPLLFTFRRHCEGGSFPCSDDYYFELLDALIESRLPDIIDIELFSGETAVRRAVANAQKNGIAALLCNHEFHRTPPQEEIVCRLKQMEDCGADICKIAVMPQSSEDVLTLLSATLEAKRLVAKPVITMSMGQTGAVSRLAGQVFGSSITFGSGTQNSAPGQIGVSALRAALDCLESGAD</sequence>
<name>AROD_NEIG1</name>
<feature type="chain" id="PRO_1000043177" description="3-dehydroquinate dehydratase">
    <location>
        <begin position="1"/>
        <end position="254"/>
    </location>
</feature>
<feature type="active site" description="Proton donor/acceptor" evidence="1">
    <location>
        <position position="144"/>
    </location>
</feature>
<feature type="active site" description="Schiff-base intermediate with substrate" evidence="1">
    <location>
        <position position="171"/>
    </location>
</feature>
<feature type="binding site" evidence="1">
    <location>
        <begin position="47"/>
        <end position="49"/>
    </location>
    <ligand>
        <name>3-dehydroquinate</name>
        <dbReference type="ChEBI" id="CHEBI:32364"/>
    </ligand>
</feature>
<feature type="binding site" evidence="1">
    <location>
        <position position="83"/>
    </location>
    <ligand>
        <name>3-dehydroquinate</name>
        <dbReference type="ChEBI" id="CHEBI:32364"/>
    </ligand>
</feature>
<feature type="binding site" evidence="1">
    <location>
        <position position="213"/>
    </location>
    <ligand>
        <name>3-dehydroquinate</name>
        <dbReference type="ChEBI" id="CHEBI:32364"/>
    </ligand>
</feature>
<feature type="binding site" evidence="1">
    <location>
        <position position="232"/>
    </location>
    <ligand>
        <name>3-dehydroquinate</name>
        <dbReference type="ChEBI" id="CHEBI:32364"/>
    </ligand>
</feature>
<feature type="binding site" evidence="1">
    <location>
        <position position="236"/>
    </location>
    <ligand>
        <name>3-dehydroquinate</name>
        <dbReference type="ChEBI" id="CHEBI:32364"/>
    </ligand>
</feature>
<proteinExistence type="inferred from homology"/>
<organism>
    <name type="scientific">Neisseria gonorrhoeae (strain ATCC 700825 / FA 1090)</name>
    <dbReference type="NCBI Taxonomy" id="242231"/>
    <lineage>
        <taxon>Bacteria</taxon>
        <taxon>Pseudomonadati</taxon>
        <taxon>Pseudomonadota</taxon>
        <taxon>Betaproteobacteria</taxon>
        <taxon>Neisseriales</taxon>
        <taxon>Neisseriaceae</taxon>
        <taxon>Neisseria</taxon>
    </lineage>
</organism>
<protein>
    <recommendedName>
        <fullName evidence="1">3-dehydroquinate dehydratase</fullName>
        <shortName evidence="1">3-dehydroquinase</shortName>
        <ecNumber evidence="1">4.2.1.10</ecNumber>
    </recommendedName>
    <alternativeName>
        <fullName evidence="1">Type I DHQase</fullName>
    </alternativeName>
    <alternativeName>
        <fullName evidence="1">Type I dehydroquinase</fullName>
        <shortName evidence="1">DHQ1</shortName>
    </alternativeName>
</protein>
<reference key="1">
    <citation type="submission" date="2003-03" db="EMBL/GenBank/DDBJ databases">
        <title>The complete genome sequence of Neisseria gonorrhoeae.</title>
        <authorList>
            <person name="Lewis L.A."/>
            <person name="Gillaspy A.F."/>
            <person name="McLaughlin R.E."/>
            <person name="Gipson M."/>
            <person name="Ducey T.F."/>
            <person name="Ownbey T."/>
            <person name="Hartman K."/>
            <person name="Nydick C."/>
            <person name="Carson M.B."/>
            <person name="Vaughn J."/>
            <person name="Thomson C."/>
            <person name="Song L."/>
            <person name="Lin S."/>
            <person name="Yuan X."/>
            <person name="Najar F."/>
            <person name="Zhan M."/>
            <person name="Ren Q."/>
            <person name="Zhu H."/>
            <person name="Qi S."/>
            <person name="Kenton S.M."/>
            <person name="Lai H."/>
            <person name="White J.D."/>
            <person name="Clifton S."/>
            <person name="Roe B.A."/>
            <person name="Dyer D.W."/>
        </authorList>
    </citation>
    <scope>NUCLEOTIDE SEQUENCE [LARGE SCALE GENOMIC DNA]</scope>
    <source>
        <strain>ATCC 700825 / FA 1090</strain>
    </source>
</reference>
<accession>Q5F8N0</accession>
<dbReference type="EC" id="4.2.1.10" evidence="1"/>
<dbReference type="EMBL" id="AE004969">
    <property type="protein sequence ID" value="AAW89457.1"/>
    <property type="molecule type" value="Genomic_DNA"/>
</dbReference>
<dbReference type="RefSeq" id="WP_003688696.1">
    <property type="nucleotide sequence ID" value="NC_002946.2"/>
</dbReference>
<dbReference type="RefSeq" id="YP_207869.1">
    <property type="nucleotide sequence ID" value="NC_002946.2"/>
</dbReference>
<dbReference type="SMR" id="Q5F8N0"/>
<dbReference type="STRING" id="242231.NGO_0740"/>
<dbReference type="GeneID" id="66753084"/>
<dbReference type="KEGG" id="ngo:NGO_0740"/>
<dbReference type="PATRIC" id="fig|242231.10.peg.881"/>
<dbReference type="HOGENOM" id="CLU_064444_0_0_4"/>
<dbReference type="UniPathway" id="UPA00053">
    <property type="reaction ID" value="UER00086"/>
</dbReference>
<dbReference type="Proteomes" id="UP000000535">
    <property type="component" value="Chromosome"/>
</dbReference>
<dbReference type="GO" id="GO:0003855">
    <property type="term" value="F:3-dehydroquinate dehydratase activity"/>
    <property type="evidence" value="ECO:0007669"/>
    <property type="project" value="UniProtKB-UniRule"/>
</dbReference>
<dbReference type="GO" id="GO:0046279">
    <property type="term" value="P:3,4-dihydroxybenzoate biosynthetic process"/>
    <property type="evidence" value="ECO:0007669"/>
    <property type="project" value="UniProtKB-ARBA"/>
</dbReference>
<dbReference type="GO" id="GO:0008652">
    <property type="term" value="P:amino acid biosynthetic process"/>
    <property type="evidence" value="ECO:0007669"/>
    <property type="project" value="UniProtKB-KW"/>
</dbReference>
<dbReference type="GO" id="GO:0009073">
    <property type="term" value="P:aromatic amino acid family biosynthetic process"/>
    <property type="evidence" value="ECO:0007669"/>
    <property type="project" value="UniProtKB-KW"/>
</dbReference>
<dbReference type="GO" id="GO:0009423">
    <property type="term" value="P:chorismate biosynthetic process"/>
    <property type="evidence" value="ECO:0007669"/>
    <property type="project" value="UniProtKB-UniRule"/>
</dbReference>
<dbReference type="CDD" id="cd00502">
    <property type="entry name" value="DHQase_I"/>
    <property type="match status" value="1"/>
</dbReference>
<dbReference type="FunFam" id="3.20.20.70:FF:000047">
    <property type="entry name" value="3-dehydroquinate dehydratase"/>
    <property type="match status" value="1"/>
</dbReference>
<dbReference type="Gene3D" id="3.20.20.70">
    <property type="entry name" value="Aldolase class I"/>
    <property type="match status" value="1"/>
</dbReference>
<dbReference type="HAMAP" id="MF_00214">
    <property type="entry name" value="AroD"/>
    <property type="match status" value="1"/>
</dbReference>
<dbReference type="InterPro" id="IPR013785">
    <property type="entry name" value="Aldolase_TIM"/>
</dbReference>
<dbReference type="InterPro" id="IPR001381">
    <property type="entry name" value="DHquinase_I"/>
</dbReference>
<dbReference type="InterPro" id="IPR050146">
    <property type="entry name" value="Type-I_3-dehydroquinase"/>
</dbReference>
<dbReference type="NCBIfam" id="TIGR01093">
    <property type="entry name" value="aroD"/>
    <property type="match status" value="1"/>
</dbReference>
<dbReference type="PANTHER" id="PTHR43699">
    <property type="entry name" value="3-DEHYDROQUINATE DEHYDRATASE"/>
    <property type="match status" value="1"/>
</dbReference>
<dbReference type="PANTHER" id="PTHR43699:SF1">
    <property type="entry name" value="3-DEHYDROQUINATE DEHYDRATASE"/>
    <property type="match status" value="1"/>
</dbReference>
<dbReference type="Pfam" id="PF01487">
    <property type="entry name" value="DHquinase_I"/>
    <property type="match status" value="1"/>
</dbReference>
<dbReference type="SUPFAM" id="SSF51569">
    <property type="entry name" value="Aldolase"/>
    <property type="match status" value="1"/>
</dbReference>
<comment type="function">
    <text evidence="1">Involved in the third step of the chorismate pathway, which leads to the biosynthesis of aromatic amino acids. Catalyzes the cis-dehydration of 3-dehydroquinate (DHQ) and introduces the first double bond of the aromatic ring to yield 3-dehydroshikimate.</text>
</comment>
<comment type="catalytic activity">
    <reaction evidence="1">
        <text>3-dehydroquinate = 3-dehydroshikimate + H2O</text>
        <dbReference type="Rhea" id="RHEA:21096"/>
        <dbReference type="ChEBI" id="CHEBI:15377"/>
        <dbReference type="ChEBI" id="CHEBI:16630"/>
        <dbReference type="ChEBI" id="CHEBI:32364"/>
        <dbReference type="EC" id="4.2.1.10"/>
    </reaction>
</comment>
<comment type="pathway">
    <text evidence="1">Metabolic intermediate biosynthesis; chorismate biosynthesis; chorismate from D-erythrose 4-phosphate and phosphoenolpyruvate: step 3/7.</text>
</comment>
<comment type="subunit">
    <text evidence="1">Homodimer.</text>
</comment>
<comment type="similarity">
    <text evidence="1">Belongs to the type-I 3-dehydroquinase family.</text>
</comment>
<keyword id="KW-0028">Amino-acid biosynthesis</keyword>
<keyword id="KW-0057">Aromatic amino acid biosynthesis</keyword>
<keyword id="KW-0456">Lyase</keyword>
<keyword id="KW-1185">Reference proteome</keyword>
<keyword id="KW-0704">Schiff base</keyword>